<keyword id="KW-0067">ATP-binding</keyword>
<keyword id="KW-0963">Cytoplasm</keyword>
<keyword id="KW-0418">Kinase</keyword>
<keyword id="KW-0479">Metal-binding</keyword>
<keyword id="KW-0545">Nucleotide biosynthesis</keyword>
<keyword id="KW-0547">Nucleotide-binding</keyword>
<keyword id="KW-1185">Reference proteome</keyword>
<keyword id="KW-0808">Transferase</keyword>
<keyword id="KW-0862">Zinc</keyword>
<name>KAD_SYNC1</name>
<reference key="1">
    <citation type="submission" date="2005-10" db="EMBL/GenBank/DDBJ databases">
        <title>Complete sequence of Pelobacter carbinolicus DSM 2380.</title>
        <authorList>
            <person name="Copeland A."/>
            <person name="Lucas S."/>
            <person name="Lapidus A."/>
            <person name="Barry K."/>
            <person name="Detter J.C."/>
            <person name="Glavina T."/>
            <person name="Hammon N."/>
            <person name="Israni S."/>
            <person name="Pitluck S."/>
            <person name="Chertkov O."/>
            <person name="Schmutz J."/>
            <person name="Larimer F."/>
            <person name="Land M."/>
            <person name="Kyrpides N."/>
            <person name="Ivanova N."/>
            <person name="Richardson P."/>
        </authorList>
    </citation>
    <scope>NUCLEOTIDE SEQUENCE [LARGE SCALE GENOMIC DNA]</scope>
    <source>
        <strain>DSM 2380 / NBRC 103641 / GraBd1</strain>
    </source>
</reference>
<feature type="chain" id="PRO_1000021754" description="Adenylate kinase">
    <location>
        <begin position="1"/>
        <end position="216"/>
    </location>
</feature>
<feature type="region of interest" description="NMP" evidence="1">
    <location>
        <begin position="30"/>
        <end position="59"/>
    </location>
</feature>
<feature type="region of interest" description="LID" evidence="1">
    <location>
        <begin position="126"/>
        <end position="163"/>
    </location>
</feature>
<feature type="binding site" evidence="1">
    <location>
        <begin position="10"/>
        <end position="15"/>
    </location>
    <ligand>
        <name>ATP</name>
        <dbReference type="ChEBI" id="CHEBI:30616"/>
    </ligand>
</feature>
<feature type="binding site" evidence="1">
    <location>
        <position position="31"/>
    </location>
    <ligand>
        <name>AMP</name>
        <dbReference type="ChEBI" id="CHEBI:456215"/>
    </ligand>
</feature>
<feature type="binding site" evidence="1">
    <location>
        <position position="36"/>
    </location>
    <ligand>
        <name>AMP</name>
        <dbReference type="ChEBI" id="CHEBI:456215"/>
    </ligand>
</feature>
<feature type="binding site" evidence="1">
    <location>
        <begin position="57"/>
        <end position="59"/>
    </location>
    <ligand>
        <name>AMP</name>
        <dbReference type="ChEBI" id="CHEBI:456215"/>
    </ligand>
</feature>
<feature type="binding site" evidence="1">
    <location>
        <begin position="85"/>
        <end position="88"/>
    </location>
    <ligand>
        <name>AMP</name>
        <dbReference type="ChEBI" id="CHEBI:456215"/>
    </ligand>
</feature>
<feature type="binding site" evidence="1">
    <location>
        <position position="92"/>
    </location>
    <ligand>
        <name>AMP</name>
        <dbReference type="ChEBI" id="CHEBI:456215"/>
    </ligand>
</feature>
<feature type="binding site" evidence="1">
    <location>
        <position position="127"/>
    </location>
    <ligand>
        <name>ATP</name>
        <dbReference type="ChEBI" id="CHEBI:30616"/>
    </ligand>
</feature>
<feature type="binding site" evidence="1">
    <location>
        <position position="130"/>
    </location>
    <ligand>
        <name>Zn(2+)</name>
        <dbReference type="ChEBI" id="CHEBI:29105"/>
        <note>structural</note>
    </ligand>
</feature>
<feature type="binding site" evidence="1">
    <location>
        <position position="133"/>
    </location>
    <ligand>
        <name>Zn(2+)</name>
        <dbReference type="ChEBI" id="CHEBI:29105"/>
        <note>structural</note>
    </ligand>
</feature>
<feature type="binding site" evidence="1">
    <location>
        <position position="150"/>
    </location>
    <ligand>
        <name>Zn(2+)</name>
        <dbReference type="ChEBI" id="CHEBI:29105"/>
        <note>structural</note>
    </ligand>
</feature>
<feature type="binding site" evidence="1">
    <location>
        <position position="153"/>
    </location>
    <ligand>
        <name>Zn(2+)</name>
        <dbReference type="ChEBI" id="CHEBI:29105"/>
        <note>structural</note>
    </ligand>
</feature>
<feature type="binding site" evidence="1">
    <location>
        <position position="160"/>
    </location>
    <ligand>
        <name>AMP</name>
        <dbReference type="ChEBI" id="CHEBI:456215"/>
    </ligand>
</feature>
<feature type="binding site" evidence="1">
    <location>
        <position position="171"/>
    </location>
    <ligand>
        <name>AMP</name>
        <dbReference type="ChEBI" id="CHEBI:456215"/>
    </ligand>
</feature>
<feature type="binding site" evidence="1">
    <location>
        <position position="199"/>
    </location>
    <ligand>
        <name>ATP</name>
        <dbReference type="ChEBI" id="CHEBI:30616"/>
    </ligand>
</feature>
<protein>
    <recommendedName>
        <fullName evidence="1">Adenylate kinase</fullName>
        <shortName evidence="1">AK</shortName>
        <ecNumber evidence="1">2.7.4.3</ecNumber>
    </recommendedName>
    <alternativeName>
        <fullName evidence="1">ATP-AMP transphosphorylase</fullName>
    </alternativeName>
    <alternativeName>
        <fullName evidence="1">ATP:AMP phosphotransferase</fullName>
    </alternativeName>
    <alternativeName>
        <fullName evidence="1">Adenylate monophosphate kinase</fullName>
    </alternativeName>
</protein>
<proteinExistence type="inferred from homology"/>
<accession>Q3A6M6</accession>
<dbReference type="EC" id="2.7.4.3" evidence="1"/>
<dbReference type="EMBL" id="CP000142">
    <property type="protein sequence ID" value="ABA87981.1"/>
    <property type="molecule type" value="Genomic_DNA"/>
</dbReference>
<dbReference type="SMR" id="Q3A6M6"/>
<dbReference type="STRING" id="338963.Pcar_0722"/>
<dbReference type="KEGG" id="pca:Pcar_0722"/>
<dbReference type="eggNOG" id="COG0563">
    <property type="taxonomic scope" value="Bacteria"/>
</dbReference>
<dbReference type="HOGENOM" id="CLU_032354_1_2_7"/>
<dbReference type="OrthoDB" id="9805030at2"/>
<dbReference type="UniPathway" id="UPA00588">
    <property type="reaction ID" value="UER00649"/>
</dbReference>
<dbReference type="Proteomes" id="UP000002534">
    <property type="component" value="Chromosome"/>
</dbReference>
<dbReference type="GO" id="GO:0005737">
    <property type="term" value="C:cytoplasm"/>
    <property type="evidence" value="ECO:0007669"/>
    <property type="project" value="UniProtKB-SubCell"/>
</dbReference>
<dbReference type="GO" id="GO:0004017">
    <property type="term" value="F:adenylate kinase activity"/>
    <property type="evidence" value="ECO:0007669"/>
    <property type="project" value="UniProtKB-UniRule"/>
</dbReference>
<dbReference type="GO" id="GO:0005524">
    <property type="term" value="F:ATP binding"/>
    <property type="evidence" value="ECO:0007669"/>
    <property type="project" value="UniProtKB-UniRule"/>
</dbReference>
<dbReference type="GO" id="GO:0008270">
    <property type="term" value="F:zinc ion binding"/>
    <property type="evidence" value="ECO:0007669"/>
    <property type="project" value="UniProtKB-UniRule"/>
</dbReference>
<dbReference type="GO" id="GO:0044209">
    <property type="term" value="P:AMP salvage"/>
    <property type="evidence" value="ECO:0007669"/>
    <property type="project" value="UniProtKB-UniRule"/>
</dbReference>
<dbReference type="CDD" id="cd01428">
    <property type="entry name" value="ADK"/>
    <property type="match status" value="1"/>
</dbReference>
<dbReference type="FunFam" id="3.40.50.300:FF:000106">
    <property type="entry name" value="Adenylate kinase mitochondrial"/>
    <property type="match status" value="1"/>
</dbReference>
<dbReference type="Gene3D" id="3.40.50.300">
    <property type="entry name" value="P-loop containing nucleotide triphosphate hydrolases"/>
    <property type="match status" value="1"/>
</dbReference>
<dbReference type="HAMAP" id="MF_00235">
    <property type="entry name" value="Adenylate_kinase_Adk"/>
    <property type="match status" value="1"/>
</dbReference>
<dbReference type="InterPro" id="IPR006259">
    <property type="entry name" value="Adenyl_kin_sub"/>
</dbReference>
<dbReference type="InterPro" id="IPR000850">
    <property type="entry name" value="Adenylat/UMP-CMP_kin"/>
</dbReference>
<dbReference type="InterPro" id="IPR033690">
    <property type="entry name" value="Adenylat_kinase_CS"/>
</dbReference>
<dbReference type="InterPro" id="IPR007862">
    <property type="entry name" value="Adenylate_kinase_lid-dom"/>
</dbReference>
<dbReference type="InterPro" id="IPR027417">
    <property type="entry name" value="P-loop_NTPase"/>
</dbReference>
<dbReference type="NCBIfam" id="TIGR01351">
    <property type="entry name" value="adk"/>
    <property type="match status" value="1"/>
</dbReference>
<dbReference type="NCBIfam" id="NF001380">
    <property type="entry name" value="PRK00279.1-2"/>
    <property type="match status" value="1"/>
</dbReference>
<dbReference type="NCBIfam" id="NF001381">
    <property type="entry name" value="PRK00279.1-3"/>
    <property type="match status" value="1"/>
</dbReference>
<dbReference type="NCBIfam" id="NF011100">
    <property type="entry name" value="PRK14527.1"/>
    <property type="match status" value="1"/>
</dbReference>
<dbReference type="PANTHER" id="PTHR23359">
    <property type="entry name" value="NUCLEOTIDE KINASE"/>
    <property type="match status" value="1"/>
</dbReference>
<dbReference type="Pfam" id="PF00406">
    <property type="entry name" value="ADK"/>
    <property type="match status" value="1"/>
</dbReference>
<dbReference type="Pfam" id="PF05191">
    <property type="entry name" value="ADK_lid"/>
    <property type="match status" value="1"/>
</dbReference>
<dbReference type="PRINTS" id="PR00094">
    <property type="entry name" value="ADENYLTKNASE"/>
</dbReference>
<dbReference type="SUPFAM" id="SSF52540">
    <property type="entry name" value="P-loop containing nucleoside triphosphate hydrolases"/>
    <property type="match status" value="1"/>
</dbReference>
<dbReference type="PROSITE" id="PS00113">
    <property type="entry name" value="ADENYLATE_KINASE"/>
    <property type="match status" value="1"/>
</dbReference>
<organism>
    <name type="scientific">Syntrophotalea carbinolica (strain DSM 2380 / NBRC 103641 / GraBd1)</name>
    <name type="common">Pelobacter carbinolicus</name>
    <dbReference type="NCBI Taxonomy" id="338963"/>
    <lineage>
        <taxon>Bacteria</taxon>
        <taxon>Pseudomonadati</taxon>
        <taxon>Thermodesulfobacteriota</taxon>
        <taxon>Desulfuromonadia</taxon>
        <taxon>Desulfuromonadales</taxon>
        <taxon>Syntrophotaleaceae</taxon>
        <taxon>Syntrophotalea</taxon>
    </lineage>
</organism>
<sequence>MKMILLGPPGSGKGTQAKMLSERLGIPQISTGDMLRAAVKEGTPMGVKAKAKMDAGALVPDEVVVGIVRERLVKDDCDKGFILDGFPRTLPQADALKQTLGDLKKDLDAVISLEVDNDAVVGRVAGRRTCRDCGKMYHVEFDAPAVADKCDKCGGQLFQRDDDKEETIRKRLDVYAQQTAPLIAYYRADGLLRDIDGMKDISGVQQQILSALGCGL</sequence>
<comment type="function">
    <text evidence="1">Catalyzes the reversible transfer of the terminal phosphate group between ATP and AMP. Plays an important role in cellular energy homeostasis and in adenine nucleotide metabolism.</text>
</comment>
<comment type="catalytic activity">
    <reaction evidence="1">
        <text>AMP + ATP = 2 ADP</text>
        <dbReference type="Rhea" id="RHEA:12973"/>
        <dbReference type="ChEBI" id="CHEBI:30616"/>
        <dbReference type="ChEBI" id="CHEBI:456215"/>
        <dbReference type="ChEBI" id="CHEBI:456216"/>
        <dbReference type="EC" id="2.7.4.3"/>
    </reaction>
</comment>
<comment type="pathway">
    <text evidence="1">Purine metabolism; AMP biosynthesis via salvage pathway; AMP from ADP: step 1/1.</text>
</comment>
<comment type="subunit">
    <text evidence="1">Monomer.</text>
</comment>
<comment type="subcellular location">
    <subcellularLocation>
        <location evidence="1">Cytoplasm</location>
    </subcellularLocation>
</comment>
<comment type="domain">
    <text evidence="1">Consists of three domains, a large central CORE domain and two small peripheral domains, NMPbind and LID, which undergo movements during catalysis. The LID domain closes over the site of phosphoryl transfer upon ATP binding. Assembling and dissambling the active center during each catalytic cycle provides an effective means to prevent ATP hydrolysis. Some bacteria have evolved a zinc-coordinating structure that stabilizes the LID domain.</text>
</comment>
<comment type="similarity">
    <text evidence="1">Belongs to the adenylate kinase family.</text>
</comment>
<evidence type="ECO:0000255" key="1">
    <source>
        <dbReference type="HAMAP-Rule" id="MF_00235"/>
    </source>
</evidence>
<gene>
    <name evidence="1" type="primary">adk</name>
    <name type="ordered locus">Pcar_0722</name>
</gene>